<gene>
    <name evidence="1" type="primary">lspA</name>
    <name type="ordered locus">BAMEG_0595</name>
</gene>
<protein>
    <recommendedName>
        <fullName evidence="1">Lipoprotein signal peptidase</fullName>
        <ecNumber evidence="1">3.4.23.36</ecNumber>
    </recommendedName>
    <alternativeName>
        <fullName evidence="1">Prolipoprotein signal peptidase</fullName>
    </alternativeName>
    <alternativeName>
        <fullName evidence="1">Signal peptidase II</fullName>
        <shortName evidence="1">SPase II</shortName>
    </alternativeName>
</protein>
<evidence type="ECO:0000255" key="1">
    <source>
        <dbReference type="HAMAP-Rule" id="MF_00161"/>
    </source>
</evidence>
<reference key="1">
    <citation type="submission" date="2008-10" db="EMBL/GenBank/DDBJ databases">
        <title>Genome sequence of Bacillus anthracis str. CDC 684.</title>
        <authorList>
            <person name="Dodson R.J."/>
            <person name="Munk A.C."/>
            <person name="Brettin T."/>
            <person name="Bruce D."/>
            <person name="Detter C."/>
            <person name="Tapia R."/>
            <person name="Han C."/>
            <person name="Sutton G."/>
            <person name="Sims D."/>
        </authorList>
    </citation>
    <scope>NUCLEOTIDE SEQUENCE [LARGE SCALE GENOMIC DNA]</scope>
    <source>
        <strain>CDC 684 / NRRL 3495</strain>
    </source>
</reference>
<organism>
    <name type="scientific">Bacillus anthracis (strain CDC 684 / NRRL 3495)</name>
    <dbReference type="NCBI Taxonomy" id="568206"/>
    <lineage>
        <taxon>Bacteria</taxon>
        <taxon>Bacillati</taxon>
        <taxon>Bacillota</taxon>
        <taxon>Bacilli</taxon>
        <taxon>Bacillales</taxon>
        <taxon>Bacillaceae</taxon>
        <taxon>Bacillus</taxon>
        <taxon>Bacillus cereus group</taxon>
    </lineage>
</organism>
<name>LSPA_BACAC</name>
<keyword id="KW-0064">Aspartyl protease</keyword>
<keyword id="KW-1003">Cell membrane</keyword>
<keyword id="KW-0378">Hydrolase</keyword>
<keyword id="KW-0472">Membrane</keyword>
<keyword id="KW-0645">Protease</keyword>
<keyword id="KW-0812">Transmembrane</keyword>
<keyword id="KW-1133">Transmembrane helix</keyword>
<feature type="chain" id="PRO_1000123483" description="Lipoprotein signal peptidase">
    <location>
        <begin position="1"/>
        <end position="152"/>
    </location>
</feature>
<feature type="transmembrane region" description="Helical" evidence="1">
    <location>
        <begin position="55"/>
        <end position="75"/>
    </location>
</feature>
<feature type="transmembrane region" description="Helical" evidence="1">
    <location>
        <begin position="85"/>
        <end position="105"/>
    </location>
</feature>
<feature type="transmembrane region" description="Helical" evidence="1">
    <location>
        <begin position="124"/>
        <end position="144"/>
    </location>
</feature>
<feature type="active site" evidence="1">
    <location>
        <position position="111"/>
    </location>
</feature>
<feature type="active site" evidence="1">
    <location>
        <position position="129"/>
    </location>
</feature>
<dbReference type="EC" id="3.4.23.36" evidence="1"/>
<dbReference type="EMBL" id="CP001215">
    <property type="protein sequence ID" value="ACP16739.1"/>
    <property type="molecule type" value="Genomic_DNA"/>
</dbReference>
<dbReference type="RefSeq" id="WP_000642181.1">
    <property type="nucleotide sequence ID" value="NC_012581.1"/>
</dbReference>
<dbReference type="SMR" id="C3L732"/>
<dbReference type="GeneID" id="45023722"/>
<dbReference type="KEGG" id="bah:BAMEG_0595"/>
<dbReference type="HOGENOM" id="CLU_083252_3_0_9"/>
<dbReference type="UniPathway" id="UPA00665"/>
<dbReference type="GO" id="GO:0005886">
    <property type="term" value="C:plasma membrane"/>
    <property type="evidence" value="ECO:0007669"/>
    <property type="project" value="UniProtKB-SubCell"/>
</dbReference>
<dbReference type="GO" id="GO:0004190">
    <property type="term" value="F:aspartic-type endopeptidase activity"/>
    <property type="evidence" value="ECO:0007669"/>
    <property type="project" value="UniProtKB-UniRule"/>
</dbReference>
<dbReference type="GO" id="GO:0006508">
    <property type="term" value="P:proteolysis"/>
    <property type="evidence" value="ECO:0007669"/>
    <property type="project" value="UniProtKB-KW"/>
</dbReference>
<dbReference type="HAMAP" id="MF_00161">
    <property type="entry name" value="LspA"/>
    <property type="match status" value="1"/>
</dbReference>
<dbReference type="InterPro" id="IPR001872">
    <property type="entry name" value="Peptidase_A8"/>
</dbReference>
<dbReference type="NCBIfam" id="TIGR00077">
    <property type="entry name" value="lspA"/>
    <property type="match status" value="1"/>
</dbReference>
<dbReference type="PANTHER" id="PTHR33695">
    <property type="entry name" value="LIPOPROTEIN SIGNAL PEPTIDASE"/>
    <property type="match status" value="1"/>
</dbReference>
<dbReference type="PANTHER" id="PTHR33695:SF1">
    <property type="entry name" value="LIPOPROTEIN SIGNAL PEPTIDASE"/>
    <property type="match status" value="1"/>
</dbReference>
<dbReference type="Pfam" id="PF01252">
    <property type="entry name" value="Peptidase_A8"/>
    <property type="match status" value="1"/>
</dbReference>
<dbReference type="PRINTS" id="PR00781">
    <property type="entry name" value="LIPOSIGPTASE"/>
</dbReference>
<dbReference type="PROSITE" id="PS00855">
    <property type="entry name" value="SPASE_II"/>
    <property type="match status" value="1"/>
</dbReference>
<comment type="function">
    <text evidence="1">This protein specifically catalyzes the removal of signal peptides from prolipoproteins.</text>
</comment>
<comment type="catalytic activity">
    <reaction evidence="1">
        <text>Release of signal peptides from bacterial membrane prolipoproteins. Hydrolyzes -Xaa-Yaa-Zaa-|-(S,diacylglyceryl)Cys-, in which Xaa is hydrophobic (preferably Leu), and Yaa (Ala or Ser) and Zaa (Gly or Ala) have small, neutral side chains.</text>
        <dbReference type="EC" id="3.4.23.36"/>
    </reaction>
</comment>
<comment type="pathway">
    <text evidence="1">Protein modification; lipoprotein biosynthesis (signal peptide cleavage).</text>
</comment>
<comment type="subcellular location">
    <subcellularLocation>
        <location evidence="1">Cell membrane</location>
        <topology evidence="1">Multi-pass membrane protein</topology>
    </subcellularLocation>
</comment>
<comment type="similarity">
    <text evidence="1">Belongs to the peptidase A8 family.</text>
</comment>
<accession>C3L732</accession>
<proteinExistence type="inferred from homology"/>
<sequence length="152" mass="17454">MIYYVIALFVIAIDQISKWLIVKNMELGTSIPIIDNVLYITSHRNRGAAWGILENKMWFFYIITVVFVVFIVFYMKKYAKTDKLLGISLGLILGGAIGNFIDRVFRQEVVDFIHVYIFSYNYPVFNIADSALCIGVVLIIIQTLLEGKKTKE</sequence>